<dbReference type="EC" id="6.1.1.17" evidence="1"/>
<dbReference type="EMBL" id="CR626927">
    <property type="protein sequence ID" value="CAH09705.1"/>
    <property type="molecule type" value="Genomic_DNA"/>
</dbReference>
<dbReference type="RefSeq" id="WP_005791502.1">
    <property type="nucleotide sequence ID" value="NZ_UFTH01000001.1"/>
</dbReference>
<dbReference type="SMR" id="Q5L883"/>
<dbReference type="PaxDb" id="272559-BF9343_3924"/>
<dbReference type="GeneID" id="60367739"/>
<dbReference type="KEGG" id="bfs:BF9343_3924"/>
<dbReference type="eggNOG" id="COG0008">
    <property type="taxonomic scope" value="Bacteria"/>
</dbReference>
<dbReference type="HOGENOM" id="CLU_015768_6_3_10"/>
<dbReference type="Proteomes" id="UP000006731">
    <property type="component" value="Chromosome"/>
</dbReference>
<dbReference type="GO" id="GO:0005829">
    <property type="term" value="C:cytosol"/>
    <property type="evidence" value="ECO:0007669"/>
    <property type="project" value="TreeGrafter"/>
</dbReference>
<dbReference type="GO" id="GO:0005524">
    <property type="term" value="F:ATP binding"/>
    <property type="evidence" value="ECO:0007669"/>
    <property type="project" value="UniProtKB-UniRule"/>
</dbReference>
<dbReference type="GO" id="GO:0004818">
    <property type="term" value="F:glutamate-tRNA ligase activity"/>
    <property type="evidence" value="ECO:0007669"/>
    <property type="project" value="UniProtKB-UniRule"/>
</dbReference>
<dbReference type="GO" id="GO:0000049">
    <property type="term" value="F:tRNA binding"/>
    <property type="evidence" value="ECO:0007669"/>
    <property type="project" value="InterPro"/>
</dbReference>
<dbReference type="GO" id="GO:0008270">
    <property type="term" value="F:zinc ion binding"/>
    <property type="evidence" value="ECO:0007669"/>
    <property type="project" value="InterPro"/>
</dbReference>
<dbReference type="GO" id="GO:0006424">
    <property type="term" value="P:glutamyl-tRNA aminoacylation"/>
    <property type="evidence" value="ECO:0007669"/>
    <property type="project" value="UniProtKB-UniRule"/>
</dbReference>
<dbReference type="CDD" id="cd00808">
    <property type="entry name" value="GluRS_core"/>
    <property type="match status" value="1"/>
</dbReference>
<dbReference type="FunFam" id="1.10.10.350:FF:000005">
    <property type="entry name" value="Glutamate--tRNA ligase"/>
    <property type="match status" value="1"/>
</dbReference>
<dbReference type="FunFam" id="3.40.50.620:FF:000127">
    <property type="entry name" value="Glutamate--tRNA ligase"/>
    <property type="match status" value="1"/>
</dbReference>
<dbReference type="Gene3D" id="1.10.10.350">
    <property type="match status" value="1"/>
</dbReference>
<dbReference type="Gene3D" id="3.40.50.620">
    <property type="entry name" value="HUPs"/>
    <property type="match status" value="1"/>
</dbReference>
<dbReference type="HAMAP" id="MF_00022">
    <property type="entry name" value="Glu_tRNA_synth_type1"/>
    <property type="match status" value="1"/>
</dbReference>
<dbReference type="InterPro" id="IPR045462">
    <property type="entry name" value="aa-tRNA-synth_I_cd-bd"/>
</dbReference>
<dbReference type="InterPro" id="IPR020751">
    <property type="entry name" value="aa-tRNA-synth_I_codon-bd_sub2"/>
</dbReference>
<dbReference type="InterPro" id="IPR001412">
    <property type="entry name" value="aa-tRNA-synth_I_CS"/>
</dbReference>
<dbReference type="InterPro" id="IPR008925">
    <property type="entry name" value="aa_tRNA-synth_I_cd-bd_sf"/>
</dbReference>
<dbReference type="InterPro" id="IPR004527">
    <property type="entry name" value="Glu-tRNA-ligase_bac/mito"/>
</dbReference>
<dbReference type="InterPro" id="IPR000924">
    <property type="entry name" value="Glu/Gln-tRNA-synth"/>
</dbReference>
<dbReference type="InterPro" id="IPR020058">
    <property type="entry name" value="Glu/Gln-tRNA-synth_Ib_cat-dom"/>
</dbReference>
<dbReference type="InterPro" id="IPR049940">
    <property type="entry name" value="GluQ/Sye"/>
</dbReference>
<dbReference type="InterPro" id="IPR033910">
    <property type="entry name" value="GluRS_core"/>
</dbReference>
<dbReference type="InterPro" id="IPR014729">
    <property type="entry name" value="Rossmann-like_a/b/a_fold"/>
</dbReference>
<dbReference type="NCBIfam" id="TIGR00464">
    <property type="entry name" value="gltX_bact"/>
    <property type="match status" value="1"/>
</dbReference>
<dbReference type="PANTHER" id="PTHR43311">
    <property type="entry name" value="GLUTAMATE--TRNA LIGASE"/>
    <property type="match status" value="1"/>
</dbReference>
<dbReference type="PANTHER" id="PTHR43311:SF2">
    <property type="entry name" value="GLUTAMATE--TRNA LIGASE, MITOCHONDRIAL-RELATED"/>
    <property type="match status" value="1"/>
</dbReference>
<dbReference type="Pfam" id="PF19269">
    <property type="entry name" value="Anticodon_2"/>
    <property type="match status" value="1"/>
</dbReference>
<dbReference type="Pfam" id="PF00749">
    <property type="entry name" value="tRNA-synt_1c"/>
    <property type="match status" value="1"/>
</dbReference>
<dbReference type="PRINTS" id="PR00987">
    <property type="entry name" value="TRNASYNTHGLU"/>
</dbReference>
<dbReference type="SUPFAM" id="SSF48163">
    <property type="entry name" value="An anticodon-binding domain of class I aminoacyl-tRNA synthetases"/>
    <property type="match status" value="1"/>
</dbReference>
<dbReference type="SUPFAM" id="SSF52374">
    <property type="entry name" value="Nucleotidylyl transferase"/>
    <property type="match status" value="1"/>
</dbReference>
<dbReference type="PROSITE" id="PS00178">
    <property type="entry name" value="AA_TRNA_LIGASE_I"/>
    <property type="match status" value="1"/>
</dbReference>
<proteinExistence type="inferred from homology"/>
<evidence type="ECO:0000255" key="1">
    <source>
        <dbReference type="HAMAP-Rule" id="MF_00022"/>
    </source>
</evidence>
<organism>
    <name type="scientific">Bacteroides fragilis (strain ATCC 25285 / DSM 2151 / CCUG 4856 / JCM 11019 / LMG 10263 / NCTC 9343 / Onslow / VPI 2553 / EN-2)</name>
    <dbReference type="NCBI Taxonomy" id="272559"/>
    <lineage>
        <taxon>Bacteria</taxon>
        <taxon>Pseudomonadati</taxon>
        <taxon>Bacteroidota</taxon>
        <taxon>Bacteroidia</taxon>
        <taxon>Bacteroidales</taxon>
        <taxon>Bacteroidaceae</taxon>
        <taxon>Bacteroides</taxon>
    </lineage>
</organism>
<feature type="chain" id="PRO_0000237340" description="Glutamate--tRNA ligase">
    <location>
        <begin position="1"/>
        <end position="505"/>
    </location>
</feature>
<feature type="short sequence motif" description="'HIGH' region" evidence="1">
    <location>
        <begin position="12"/>
        <end position="22"/>
    </location>
</feature>
<feature type="short sequence motif" description="'KMSKS' region" evidence="1">
    <location>
        <begin position="260"/>
        <end position="264"/>
    </location>
</feature>
<feature type="binding site" evidence="1">
    <location>
        <position position="263"/>
    </location>
    <ligand>
        <name>ATP</name>
        <dbReference type="ChEBI" id="CHEBI:30616"/>
    </ligand>
</feature>
<accession>Q5L883</accession>
<gene>
    <name evidence="1" type="primary">gltX</name>
    <name type="ordered locus">BF4030</name>
</gene>
<comment type="function">
    <text evidence="1">Catalyzes the attachment of glutamate to tRNA(Glu) in a two-step reaction: glutamate is first activated by ATP to form Glu-AMP and then transferred to the acceptor end of tRNA(Glu).</text>
</comment>
<comment type="catalytic activity">
    <reaction evidence="1">
        <text>tRNA(Glu) + L-glutamate + ATP = L-glutamyl-tRNA(Glu) + AMP + diphosphate</text>
        <dbReference type="Rhea" id="RHEA:23540"/>
        <dbReference type="Rhea" id="RHEA-COMP:9663"/>
        <dbReference type="Rhea" id="RHEA-COMP:9680"/>
        <dbReference type="ChEBI" id="CHEBI:29985"/>
        <dbReference type="ChEBI" id="CHEBI:30616"/>
        <dbReference type="ChEBI" id="CHEBI:33019"/>
        <dbReference type="ChEBI" id="CHEBI:78442"/>
        <dbReference type="ChEBI" id="CHEBI:78520"/>
        <dbReference type="ChEBI" id="CHEBI:456215"/>
        <dbReference type="EC" id="6.1.1.17"/>
    </reaction>
</comment>
<comment type="subunit">
    <text evidence="1">Monomer.</text>
</comment>
<comment type="subcellular location">
    <subcellularLocation>
        <location evidence="1">Cytoplasm</location>
    </subcellularLocation>
</comment>
<comment type="similarity">
    <text evidence="1">Belongs to the class-I aminoacyl-tRNA synthetase family. Glutamate--tRNA ligase type 1 subfamily.</text>
</comment>
<name>SYE_BACFN</name>
<keyword id="KW-0030">Aminoacyl-tRNA synthetase</keyword>
<keyword id="KW-0067">ATP-binding</keyword>
<keyword id="KW-0963">Cytoplasm</keyword>
<keyword id="KW-0436">Ligase</keyword>
<keyword id="KW-0547">Nucleotide-binding</keyword>
<keyword id="KW-0648">Protein biosynthesis</keyword>
<reference key="1">
    <citation type="journal article" date="2005" name="Science">
        <title>Extensive DNA inversions in the B. fragilis genome control variable gene expression.</title>
        <authorList>
            <person name="Cerdeno-Tarraga A.-M."/>
            <person name="Patrick S."/>
            <person name="Crossman L.C."/>
            <person name="Blakely G."/>
            <person name="Abratt V."/>
            <person name="Lennard N."/>
            <person name="Poxton I."/>
            <person name="Duerden B."/>
            <person name="Harris B."/>
            <person name="Quail M.A."/>
            <person name="Barron A."/>
            <person name="Clark L."/>
            <person name="Corton C."/>
            <person name="Doggett J."/>
            <person name="Holden M.T.G."/>
            <person name="Larke N."/>
            <person name="Line A."/>
            <person name="Lord A."/>
            <person name="Norbertczak H."/>
            <person name="Ormond D."/>
            <person name="Price C."/>
            <person name="Rabbinowitsch E."/>
            <person name="Woodward J."/>
            <person name="Barrell B.G."/>
            <person name="Parkhill J."/>
        </authorList>
    </citation>
    <scope>NUCLEOTIDE SEQUENCE [LARGE SCALE GENOMIC DNA]</scope>
    <source>
        <strain>ATCC 25285 / DSM 2151 / CCUG 4856 / JCM 11019 / LMG 10263 / NCTC 9343 / Onslow / VPI 2553 / EN-2</strain>
    </source>
</reference>
<protein>
    <recommendedName>
        <fullName evidence="1">Glutamate--tRNA ligase</fullName>
        <ecNumber evidence="1">6.1.1.17</ecNumber>
    </recommendedName>
    <alternativeName>
        <fullName evidence="1">Glutamyl-tRNA synthetase</fullName>
        <shortName evidence="1">GluRS</shortName>
    </alternativeName>
</protein>
<sequence length="505" mass="57722">MAERKVRVRFAPSPTGALHIGGVRTALYNYLFARQHGGDLIFRIEDTDSNRFVPGAEEYILESFKWLGIQFDEGVSFGGEYGPYRQSERREIYKKYVQVLLDNGKAYIAFDTPEELDAKRAEIANFQYDASTRVGMRNSLTLPKEEVEALIADGKQYVVRFKIEPNEDIHVNDLIRGEVVINSSILDDKVLYKSADELPTYHLANIVDDHLMEVSHVIRGEEWLPSAPLHVLLYRAFGWEDTMPAFAHLPLLLKPEGNGKLSKRDGDRLGFPVFPLEWHDPKSGEISSGYRESGYLPEAVINFLALLGWNPGNDQEVMSMDELIRLFDLHRCSKSGAKFDYKKGIWFNHTYIQQKSDKEIAELFVPVLKEHGVEAPFEKVVTVVGMMKDRVSFVKELWEVCSFFFVAPTEYDEKTVKKRWKEDSAKCMTELAEVLAGIEDFSIEGQEKIVMDWIAEKGYHTGNIMNAFRLTLVGEGKGPHMFDISWVLGKEETLARMKRAVEVLK</sequence>